<name>MNMA_NITEU</name>
<accession>Q82VV0</accession>
<keyword id="KW-0067">ATP-binding</keyword>
<keyword id="KW-0963">Cytoplasm</keyword>
<keyword id="KW-1015">Disulfide bond</keyword>
<keyword id="KW-0547">Nucleotide-binding</keyword>
<keyword id="KW-1185">Reference proteome</keyword>
<keyword id="KW-0694">RNA-binding</keyword>
<keyword id="KW-0808">Transferase</keyword>
<keyword id="KW-0819">tRNA processing</keyword>
<keyword id="KW-0820">tRNA-binding</keyword>
<sequence length="362" mass="40587">MNKSRVVVGMSGGVDSSVAALLLKQQGYDVTGLFMKNWEEDDTDEYCSSRQDFLDAASVADILDIPLEVVNFSTEYRERVFNLFLKEYQAGRTPNPDVLCNSEIKFRAFLDHALNLGADWIATGHYAQVHETDGLFQLLKGEDGNKDQSYFLYRLNQQQLSHTIFPIGHLYKREVRKIAREHRLPNSTKKDSTGICFIGERPFREFLNRYLPANPGEIHTLDDQVVGEHLGVMYYTIGQRQGLGIGGTRQGSEQPWFVSGKDIKKNVLYVVQGHDHPALLRSSLTAADLSWISGTPPHQNWVYAAKIRYRQTDAPCAITHFEHDSCQIGFAAPQWGITPGQSVVVYESKVCLGGGVIIGSND</sequence>
<protein>
    <recommendedName>
        <fullName evidence="1">tRNA-specific 2-thiouridylase MnmA</fullName>
        <ecNumber evidence="1">2.8.1.13</ecNumber>
    </recommendedName>
</protein>
<gene>
    <name evidence="1" type="primary">mnmA</name>
    <name type="ordered locus">NE0963</name>
</gene>
<feature type="chain" id="PRO_0000349718" description="tRNA-specific 2-thiouridylase MnmA">
    <location>
        <begin position="1"/>
        <end position="362"/>
    </location>
</feature>
<feature type="region of interest" description="Interaction with target base in tRNA" evidence="1">
    <location>
        <begin position="95"/>
        <end position="97"/>
    </location>
</feature>
<feature type="region of interest" description="Interaction with tRNA" evidence="1">
    <location>
        <begin position="146"/>
        <end position="148"/>
    </location>
</feature>
<feature type="region of interest" description="Interaction with tRNA" evidence="1">
    <location>
        <begin position="308"/>
        <end position="309"/>
    </location>
</feature>
<feature type="active site" description="Nucleophile" evidence="1">
    <location>
        <position position="100"/>
    </location>
</feature>
<feature type="active site" description="Cysteine persulfide intermediate" evidence="1">
    <location>
        <position position="196"/>
    </location>
</feature>
<feature type="binding site" evidence="1">
    <location>
        <begin position="9"/>
        <end position="16"/>
    </location>
    <ligand>
        <name>ATP</name>
        <dbReference type="ChEBI" id="CHEBI:30616"/>
    </ligand>
</feature>
<feature type="binding site" evidence="1">
    <location>
        <position position="35"/>
    </location>
    <ligand>
        <name>ATP</name>
        <dbReference type="ChEBI" id="CHEBI:30616"/>
    </ligand>
</feature>
<feature type="binding site" evidence="1">
    <location>
        <position position="124"/>
    </location>
    <ligand>
        <name>ATP</name>
        <dbReference type="ChEBI" id="CHEBI:30616"/>
    </ligand>
</feature>
<feature type="site" description="Interaction with tRNA" evidence="1">
    <location>
        <position position="125"/>
    </location>
</feature>
<feature type="site" description="Interaction with tRNA" evidence="1">
    <location>
        <position position="341"/>
    </location>
</feature>
<feature type="disulfide bond" description="Alternate" evidence="1">
    <location>
        <begin position="100"/>
        <end position="196"/>
    </location>
</feature>
<organism>
    <name type="scientific">Nitrosomonas europaea (strain ATCC 19718 / CIP 103999 / KCTC 2705 / NBRC 14298)</name>
    <dbReference type="NCBI Taxonomy" id="228410"/>
    <lineage>
        <taxon>Bacteria</taxon>
        <taxon>Pseudomonadati</taxon>
        <taxon>Pseudomonadota</taxon>
        <taxon>Betaproteobacteria</taxon>
        <taxon>Nitrosomonadales</taxon>
        <taxon>Nitrosomonadaceae</taxon>
        <taxon>Nitrosomonas</taxon>
    </lineage>
</organism>
<proteinExistence type="inferred from homology"/>
<dbReference type="EC" id="2.8.1.13" evidence="1"/>
<dbReference type="EMBL" id="AL954747">
    <property type="protein sequence ID" value="CAD84874.1"/>
    <property type="molecule type" value="Genomic_DNA"/>
</dbReference>
<dbReference type="RefSeq" id="WP_011111572.1">
    <property type="nucleotide sequence ID" value="NC_004757.1"/>
</dbReference>
<dbReference type="SMR" id="Q82VV0"/>
<dbReference type="STRING" id="228410.NE0963"/>
<dbReference type="GeneID" id="87104155"/>
<dbReference type="KEGG" id="neu:NE0963"/>
<dbReference type="eggNOG" id="COG0482">
    <property type="taxonomic scope" value="Bacteria"/>
</dbReference>
<dbReference type="HOGENOM" id="CLU_035188_1_0_4"/>
<dbReference type="OrthoDB" id="9800696at2"/>
<dbReference type="PhylomeDB" id="Q82VV0"/>
<dbReference type="Proteomes" id="UP000001416">
    <property type="component" value="Chromosome"/>
</dbReference>
<dbReference type="GO" id="GO:0005737">
    <property type="term" value="C:cytoplasm"/>
    <property type="evidence" value="ECO:0007669"/>
    <property type="project" value="UniProtKB-SubCell"/>
</dbReference>
<dbReference type="GO" id="GO:0005524">
    <property type="term" value="F:ATP binding"/>
    <property type="evidence" value="ECO:0007669"/>
    <property type="project" value="UniProtKB-KW"/>
</dbReference>
<dbReference type="GO" id="GO:0000049">
    <property type="term" value="F:tRNA binding"/>
    <property type="evidence" value="ECO:0007669"/>
    <property type="project" value="UniProtKB-KW"/>
</dbReference>
<dbReference type="GO" id="GO:0103016">
    <property type="term" value="F:tRNA-uridine 2-sulfurtransferase activity"/>
    <property type="evidence" value="ECO:0007669"/>
    <property type="project" value="UniProtKB-EC"/>
</dbReference>
<dbReference type="GO" id="GO:0002143">
    <property type="term" value="P:tRNA wobble position uridine thiolation"/>
    <property type="evidence" value="ECO:0007669"/>
    <property type="project" value="TreeGrafter"/>
</dbReference>
<dbReference type="CDD" id="cd01998">
    <property type="entry name" value="MnmA_TRMU-like"/>
    <property type="match status" value="1"/>
</dbReference>
<dbReference type="FunFam" id="2.30.30.280:FF:000001">
    <property type="entry name" value="tRNA-specific 2-thiouridylase MnmA"/>
    <property type="match status" value="1"/>
</dbReference>
<dbReference type="FunFam" id="2.40.30.10:FF:000023">
    <property type="entry name" value="tRNA-specific 2-thiouridylase MnmA"/>
    <property type="match status" value="1"/>
</dbReference>
<dbReference type="FunFam" id="3.40.50.620:FF:000004">
    <property type="entry name" value="tRNA-specific 2-thiouridylase MnmA"/>
    <property type="match status" value="1"/>
</dbReference>
<dbReference type="Gene3D" id="2.30.30.280">
    <property type="entry name" value="Adenine nucleotide alpha hydrolases-like domains"/>
    <property type="match status" value="1"/>
</dbReference>
<dbReference type="Gene3D" id="3.40.50.620">
    <property type="entry name" value="HUPs"/>
    <property type="match status" value="1"/>
</dbReference>
<dbReference type="Gene3D" id="2.40.30.10">
    <property type="entry name" value="Translation factors"/>
    <property type="match status" value="1"/>
</dbReference>
<dbReference type="HAMAP" id="MF_00144">
    <property type="entry name" value="tRNA_thiouridyl_MnmA"/>
    <property type="match status" value="1"/>
</dbReference>
<dbReference type="InterPro" id="IPR004506">
    <property type="entry name" value="MnmA-like"/>
</dbReference>
<dbReference type="InterPro" id="IPR046885">
    <property type="entry name" value="MnmA-like_C"/>
</dbReference>
<dbReference type="InterPro" id="IPR046884">
    <property type="entry name" value="MnmA-like_central"/>
</dbReference>
<dbReference type="InterPro" id="IPR023382">
    <property type="entry name" value="MnmA-like_central_sf"/>
</dbReference>
<dbReference type="InterPro" id="IPR014729">
    <property type="entry name" value="Rossmann-like_a/b/a_fold"/>
</dbReference>
<dbReference type="NCBIfam" id="NF001138">
    <property type="entry name" value="PRK00143.1"/>
    <property type="match status" value="1"/>
</dbReference>
<dbReference type="NCBIfam" id="TIGR00420">
    <property type="entry name" value="trmU"/>
    <property type="match status" value="1"/>
</dbReference>
<dbReference type="PANTHER" id="PTHR11933:SF5">
    <property type="entry name" value="MITOCHONDRIAL TRNA-SPECIFIC 2-THIOURIDYLASE 1"/>
    <property type="match status" value="1"/>
</dbReference>
<dbReference type="PANTHER" id="PTHR11933">
    <property type="entry name" value="TRNA 5-METHYLAMINOMETHYL-2-THIOURIDYLATE -METHYLTRANSFERASE"/>
    <property type="match status" value="1"/>
</dbReference>
<dbReference type="Pfam" id="PF03054">
    <property type="entry name" value="tRNA_Me_trans"/>
    <property type="match status" value="1"/>
</dbReference>
<dbReference type="Pfam" id="PF20258">
    <property type="entry name" value="tRNA_Me_trans_C"/>
    <property type="match status" value="1"/>
</dbReference>
<dbReference type="Pfam" id="PF20259">
    <property type="entry name" value="tRNA_Me_trans_M"/>
    <property type="match status" value="1"/>
</dbReference>
<dbReference type="SUPFAM" id="SSF52402">
    <property type="entry name" value="Adenine nucleotide alpha hydrolases-like"/>
    <property type="match status" value="1"/>
</dbReference>
<evidence type="ECO:0000255" key="1">
    <source>
        <dbReference type="HAMAP-Rule" id="MF_00144"/>
    </source>
</evidence>
<comment type="function">
    <text evidence="1">Catalyzes the 2-thiolation of uridine at the wobble position (U34) of tRNA, leading to the formation of s(2)U34.</text>
</comment>
<comment type="catalytic activity">
    <reaction evidence="1">
        <text>S-sulfanyl-L-cysteinyl-[protein] + uridine(34) in tRNA + AH2 + ATP = 2-thiouridine(34) in tRNA + L-cysteinyl-[protein] + A + AMP + diphosphate + H(+)</text>
        <dbReference type="Rhea" id="RHEA:47032"/>
        <dbReference type="Rhea" id="RHEA-COMP:10131"/>
        <dbReference type="Rhea" id="RHEA-COMP:11726"/>
        <dbReference type="Rhea" id="RHEA-COMP:11727"/>
        <dbReference type="Rhea" id="RHEA-COMP:11728"/>
        <dbReference type="ChEBI" id="CHEBI:13193"/>
        <dbReference type="ChEBI" id="CHEBI:15378"/>
        <dbReference type="ChEBI" id="CHEBI:17499"/>
        <dbReference type="ChEBI" id="CHEBI:29950"/>
        <dbReference type="ChEBI" id="CHEBI:30616"/>
        <dbReference type="ChEBI" id="CHEBI:33019"/>
        <dbReference type="ChEBI" id="CHEBI:61963"/>
        <dbReference type="ChEBI" id="CHEBI:65315"/>
        <dbReference type="ChEBI" id="CHEBI:87170"/>
        <dbReference type="ChEBI" id="CHEBI:456215"/>
        <dbReference type="EC" id="2.8.1.13"/>
    </reaction>
</comment>
<comment type="subcellular location">
    <subcellularLocation>
        <location evidence="1">Cytoplasm</location>
    </subcellularLocation>
</comment>
<comment type="similarity">
    <text evidence="1">Belongs to the MnmA/TRMU family.</text>
</comment>
<reference key="1">
    <citation type="journal article" date="2003" name="J. Bacteriol.">
        <title>Complete genome sequence of the ammonia-oxidizing bacterium and obligate chemolithoautotroph Nitrosomonas europaea.</title>
        <authorList>
            <person name="Chain P."/>
            <person name="Lamerdin J.E."/>
            <person name="Larimer F.W."/>
            <person name="Regala W."/>
            <person name="Lao V."/>
            <person name="Land M.L."/>
            <person name="Hauser L."/>
            <person name="Hooper A.B."/>
            <person name="Klotz M.G."/>
            <person name="Norton J."/>
            <person name="Sayavedra-Soto L.A."/>
            <person name="Arciero D.M."/>
            <person name="Hommes N.G."/>
            <person name="Whittaker M.M."/>
            <person name="Arp D.J."/>
        </authorList>
    </citation>
    <scope>NUCLEOTIDE SEQUENCE [LARGE SCALE GENOMIC DNA]</scope>
    <source>
        <strain>ATCC 19718 / CIP 103999 / KCTC 2705 / NBRC 14298</strain>
    </source>
</reference>